<accession>P0C325</accession>
<accession>P12127</accession>
<accession>Q6QXX4</accession>
<accession>Q6QY37</accession>
<name>NU4C_ORYSJ</name>
<sequence>MSSFPWLTILVVLPIFAGSLIFFLPHRGNKIVRWYTMSICLLEFLLMTYAFCYHFQLEDPLIQLKEDSKWIDVFNFHWRLGIDGLSLGSILLTGFMTTLATLAAWPVTRNSRLFYFLMLAMYSGQIGLFSSRDLLLFFIMWELELIPVYLLLSMWGGKRRLYSATKFILYTAGGSIFFLIGVLGMGLYGSNEPRLDLERLINQSYPATLEILFYFGFLIAYAVKLPIIPLHTWLPDTHGEAHYSTCMLLAGILLKMGAYGLIRINMELLPHAHYLFSPWLVIIGAMQIIYAASTSLGQRNFKKRIAYSSVSHMGFIIIGIGSITNIGLNGAILQILSHGFIGATLFFLAGTACDRMRLVYLEELGGVSIPMPKIFTMFSSFSMASLALPGMSGFVAELVVFFGLITSPKFLLMPKMLITFVMAIGMILTPIYLLSMLRQMFYGYKLFHVPNENFEDSGPRELFLLICIFLPVIGIGIYPDFVLSLSVDRVEALLSNYYPK</sequence>
<dbReference type="EC" id="7.1.1.-"/>
<dbReference type="EMBL" id="X15901">
    <property type="protein sequence ID" value="CAA33953.1"/>
    <property type="molecule type" value="Genomic_DNA"/>
</dbReference>
<dbReference type="EMBL" id="AY522330">
    <property type="protein sequence ID" value="AAS46157.1"/>
    <property type="molecule type" value="Genomic_DNA"/>
</dbReference>
<dbReference type="PIR" id="JQ0289">
    <property type="entry name" value="DERZN4"/>
</dbReference>
<dbReference type="RefSeq" id="NP_039444.1">
    <property type="nucleotide sequence ID" value="NC_001320.1"/>
</dbReference>
<dbReference type="SMR" id="P0C325"/>
<dbReference type="FunCoup" id="P0C325">
    <property type="interactions" value="8"/>
</dbReference>
<dbReference type="STRING" id="39947.P0C325"/>
<dbReference type="PaxDb" id="39947-P0C325"/>
<dbReference type="GeneID" id="3131398"/>
<dbReference type="KEGG" id="dosa:ndhD"/>
<dbReference type="KEGG" id="osa:3131398"/>
<dbReference type="InParanoid" id="P0C325"/>
<dbReference type="OrthoDB" id="622985at2759"/>
<dbReference type="Proteomes" id="UP000059680">
    <property type="component" value="Chloroplast"/>
</dbReference>
<dbReference type="GO" id="GO:0009535">
    <property type="term" value="C:chloroplast thylakoid membrane"/>
    <property type="evidence" value="ECO:0007669"/>
    <property type="project" value="UniProtKB-SubCell"/>
</dbReference>
<dbReference type="GO" id="GO:0009536">
    <property type="term" value="C:plastid"/>
    <property type="evidence" value="ECO:0000305"/>
    <property type="project" value="Gramene"/>
</dbReference>
<dbReference type="GO" id="GO:0008137">
    <property type="term" value="F:NADH dehydrogenase (ubiquinone) activity"/>
    <property type="evidence" value="ECO:0007669"/>
    <property type="project" value="InterPro"/>
</dbReference>
<dbReference type="GO" id="GO:0048039">
    <property type="term" value="F:ubiquinone binding"/>
    <property type="evidence" value="ECO:0000318"/>
    <property type="project" value="GO_Central"/>
</dbReference>
<dbReference type="GO" id="GO:0009060">
    <property type="term" value="P:aerobic respiration"/>
    <property type="evidence" value="ECO:0000318"/>
    <property type="project" value="GO_Central"/>
</dbReference>
<dbReference type="GO" id="GO:0042773">
    <property type="term" value="P:ATP synthesis coupled electron transport"/>
    <property type="evidence" value="ECO:0007669"/>
    <property type="project" value="InterPro"/>
</dbReference>
<dbReference type="GO" id="GO:0015990">
    <property type="term" value="P:electron transport coupled proton transport"/>
    <property type="evidence" value="ECO:0000318"/>
    <property type="project" value="GO_Central"/>
</dbReference>
<dbReference type="HAMAP" id="MF_00491">
    <property type="entry name" value="NDH1_NuoM"/>
    <property type="match status" value="1"/>
</dbReference>
<dbReference type="InterPro" id="IPR022997">
    <property type="entry name" value="NADH_Q_OxRdtase_chain4"/>
</dbReference>
<dbReference type="InterPro" id="IPR010227">
    <property type="entry name" value="NADH_Q_OxRdtase_chainM/4"/>
</dbReference>
<dbReference type="InterPro" id="IPR003918">
    <property type="entry name" value="NADH_UbQ_OxRdtase"/>
</dbReference>
<dbReference type="InterPro" id="IPR001750">
    <property type="entry name" value="ND/Mrp_TM"/>
</dbReference>
<dbReference type="NCBIfam" id="TIGR01972">
    <property type="entry name" value="NDH_I_M"/>
    <property type="match status" value="1"/>
</dbReference>
<dbReference type="PANTHER" id="PTHR43507:SF21">
    <property type="entry name" value="NAD(P)H-QUINONE OXIDOREDUCTASE CHAIN 4, CHLOROPLASTIC"/>
    <property type="match status" value="1"/>
</dbReference>
<dbReference type="PANTHER" id="PTHR43507">
    <property type="entry name" value="NADH-UBIQUINONE OXIDOREDUCTASE CHAIN 4"/>
    <property type="match status" value="1"/>
</dbReference>
<dbReference type="Pfam" id="PF00361">
    <property type="entry name" value="Proton_antipo_M"/>
    <property type="match status" value="1"/>
</dbReference>
<dbReference type="PRINTS" id="PR01437">
    <property type="entry name" value="NUOXDRDTASE4"/>
</dbReference>
<keyword id="KW-0150">Chloroplast</keyword>
<keyword id="KW-0472">Membrane</keyword>
<keyword id="KW-0520">NAD</keyword>
<keyword id="KW-0521">NADP</keyword>
<keyword id="KW-0934">Plastid</keyword>
<keyword id="KW-0618">Plastoquinone</keyword>
<keyword id="KW-0874">Quinone</keyword>
<keyword id="KW-1185">Reference proteome</keyword>
<keyword id="KW-0793">Thylakoid</keyword>
<keyword id="KW-1278">Translocase</keyword>
<keyword id="KW-0812">Transmembrane</keyword>
<keyword id="KW-1133">Transmembrane helix</keyword>
<organism>
    <name type="scientific">Oryza sativa subsp. japonica</name>
    <name type="common">Rice</name>
    <dbReference type="NCBI Taxonomy" id="39947"/>
    <lineage>
        <taxon>Eukaryota</taxon>
        <taxon>Viridiplantae</taxon>
        <taxon>Streptophyta</taxon>
        <taxon>Embryophyta</taxon>
        <taxon>Tracheophyta</taxon>
        <taxon>Spermatophyta</taxon>
        <taxon>Magnoliopsida</taxon>
        <taxon>Liliopsida</taxon>
        <taxon>Poales</taxon>
        <taxon>Poaceae</taxon>
        <taxon>BOP clade</taxon>
        <taxon>Oryzoideae</taxon>
        <taxon>Oryzeae</taxon>
        <taxon>Oryzinae</taxon>
        <taxon>Oryza</taxon>
        <taxon>Oryza sativa</taxon>
    </lineage>
</organism>
<reference key="1">
    <citation type="journal article" date="1989" name="Mol. Gen. Genet.">
        <title>The complete sequence of the rice (Oryza sativa) chloroplast genome: intermolecular recombination between distinct tRNA genes accounts for a major plastid DNA inversion during the evolution of the cereals.</title>
        <authorList>
            <person name="Hiratsuka J."/>
            <person name="Shimada H."/>
            <person name="Whittier R."/>
            <person name="Ishibashi T."/>
            <person name="Sakamoto M."/>
            <person name="Mori M."/>
            <person name="Kondo C."/>
            <person name="Honji Y."/>
            <person name="Sun C.-R."/>
            <person name="Meng B.-Y."/>
            <person name="Li Y.-Q."/>
            <person name="Kanno A."/>
            <person name="Nishizawa Y."/>
            <person name="Hirai A."/>
            <person name="Shinozaki K."/>
            <person name="Sugiura M."/>
        </authorList>
    </citation>
    <scope>NUCLEOTIDE SEQUENCE [LARGE SCALE GENOMIC DNA]</scope>
    <source>
        <strain>cv. Nipponbare</strain>
    </source>
</reference>
<reference key="2">
    <citation type="journal article" date="2004" name="Plant Physiol.">
        <title>A comparison of rice chloroplast genomes.</title>
        <authorList>
            <person name="Tang J."/>
            <person name="Xia H."/>
            <person name="Cao M."/>
            <person name="Zhang X."/>
            <person name="Zeng W."/>
            <person name="Hu S."/>
            <person name="Tong W."/>
            <person name="Wang J."/>
            <person name="Wang J."/>
            <person name="Yu J."/>
            <person name="Yang H."/>
            <person name="Zhu L."/>
        </authorList>
    </citation>
    <scope>NUCLEOTIDE SEQUENCE [LARGE SCALE GENOMIC DNA]</scope>
    <source>
        <strain>cv. Nipponbare</strain>
    </source>
</reference>
<reference key="3">
    <citation type="journal article" date="1994" name="Gene">
        <title>The role of RNA editing in conservation of start codons in chloroplast genomes.</title>
        <authorList>
            <person name="Neckermann K."/>
            <person name="Zeltz P."/>
            <person name="Igloi G.L."/>
            <person name="Koessel H."/>
            <person name="Maier R.M."/>
        </authorList>
    </citation>
    <scope>LACK OF RNA EDITING OF INITIATION CODON</scope>
</reference>
<evidence type="ECO:0000255" key="1"/>
<evidence type="ECO:0000305" key="2"/>
<geneLocation type="chloroplast"/>
<comment type="catalytic activity">
    <reaction>
        <text>a plastoquinone + NADH + (n+1) H(+)(in) = a plastoquinol + NAD(+) + n H(+)(out)</text>
        <dbReference type="Rhea" id="RHEA:42608"/>
        <dbReference type="Rhea" id="RHEA-COMP:9561"/>
        <dbReference type="Rhea" id="RHEA-COMP:9562"/>
        <dbReference type="ChEBI" id="CHEBI:15378"/>
        <dbReference type="ChEBI" id="CHEBI:17757"/>
        <dbReference type="ChEBI" id="CHEBI:57540"/>
        <dbReference type="ChEBI" id="CHEBI:57945"/>
        <dbReference type="ChEBI" id="CHEBI:62192"/>
    </reaction>
</comment>
<comment type="catalytic activity">
    <reaction>
        <text>a plastoquinone + NADPH + (n+1) H(+)(in) = a plastoquinol + NADP(+) + n H(+)(out)</text>
        <dbReference type="Rhea" id="RHEA:42612"/>
        <dbReference type="Rhea" id="RHEA-COMP:9561"/>
        <dbReference type="Rhea" id="RHEA-COMP:9562"/>
        <dbReference type="ChEBI" id="CHEBI:15378"/>
        <dbReference type="ChEBI" id="CHEBI:17757"/>
        <dbReference type="ChEBI" id="CHEBI:57783"/>
        <dbReference type="ChEBI" id="CHEBI:58349"/>
        <dbReference type="ChEBI" id="CHEBI:62192"/>
    </reaction>
</comment>
<comment type="subcellular location">
    <subcellularLocation>
        <location evidence="2">Plastid</location>
        <location evidence="2">Chloroplast thylakoid membrane</location>
        <topology evidence="2">Multi-pass membrane protein</topology>
    </subcellularLocation>
</comment>
<comment type="similarity">
    <text evidence="2">Belongs to the complex I subunit 4 family.</text>
</comment>
<protein>
    <recommendedName>
        <fullName>NAD(P)H-quinone oxidoreductase chain 4, chloroplastic</fullName>
        <ecNumber>7.1.1.-</ecNumber>
    </recommendedName>
    <alternativeName>
        <fullName>NAD(P)H dehydrogenase, chain 4</fullName>
    </alternativeName>
    <alternativeName>
        <fullName>NADH-plastoquinone oxidoreductase chain 4</fullName>
    </alternativeName>
</protein>
<feature type="chain" id="PRO_0000288695" description="NAD(P)H-quinone oxidoreductase chain 4, chloroplastic">
    <location>
        <begin position="1"/>
        <end position="500"/>
    </location>
</feature>
<feature type="transmembrane region" description="Helical" evidence="1">
    <location>
        <begin position="4"/>
        <end position="24"/>
    </location>
</feature>
<feature type="transmembrane region" description="Helical" evidence="1">
    <location>
        <begin position="37"/>
        <end position="57"/>
    </location>
</feature>
<feature type="transmembrane region" description="Helical" evidence="1">
    <location>
        <begin position="87"/>
        <end position="107"/>
    </location>
</feature>
<feature type="transmembrane region" description="Helical" evidence="1">
    <location>
        <begin position="113"/>
        <end position="130"/>
    </location>
</feature>
<feature type="transmembrane region" description="Helical" evidence="1">
    <location>
        <begin position="134"/>
        <end position="154"/>
    </location>
</feature>
<feature type="transmembrane region" description="Helical" evidence="1">
    <location>
        <begin position="167"/>
        <end position="187"/>
    </location>
</feature>
<feature type="transmembrane region" description="Helical" evidence="1">
    <location>
        <begin position="211"/>
        <end position="231"/>
    </location>
</feature>
<feature type="transmembrane region" description="Helical" evidence="1">
    <location>
        <begin position="242"/>
        <end position="262"/>
    </location>
</feature>
<feature type="transmembrane region" description="Helical" evidence="1">
    <location>
        <begin position="272"/>
        <end position="292"/>
    </location>
</feature>
<feature type="transmembrane region" description="Helical" evidence="1">
    <location>
        <begin position="313"/>
        <end position="333"/>
    </location>
</feature>
<feature type="transmembrane region" description="Helical" evidence="1">
    <location>
        <begin position="334"/>
        <end position="354"/>
    </location>
</feature>
<feature type="transmembrane region" description="Helical" evidence="1">
    <location>
        <begin position="386"/>
        <end position="406"/>
    </location>
</feature>
<feature type="transmembrane region" description="Helical" evidence="1">
    <location>
        <begin position="417"/>
        <end position="437"/>
    </location>
</feature>
<feature type="transmembrane region" description="Helical" evidence="1">
    <location>
        <begin position="462"/>
        <end position="482"/>
    </location>
</feature>
<feature type="sequence conflict" description="In Ref. 1; CAA33953." evidence="2" ref="1">
    <original>V</original>
    <variation>A</variation>
    <location>
        <position position="367"/>
    </location>
</feature>
<proteinExistence type="evidence at transcript level"/>
<gene>
    <name type="primary">ndhD</name>
    <name type="ORF">Nip169</name>
</gene>